<protein>
    <recommendedName>
        <fullName>Sensor histidine kinase AruS</fullName>
        <ecNumber>2.7.13.3</ecNumber>
    </recommendedName>
</protein>
<feature type="chain" id="PRO_0000418389" description="Sensor histidine kinase AruS">
    <location>
        <begin position="1"/>
        <end position="998"/>
    </location>
</feature>
<feature type="transmembrane region" description="Helical" evidence="2">
    <location>
        <begin position="264"/>
        <end position="284"/>
    </location>
</feature>
<feature type="transmembrane region" description="Helical" evidence="2">
    <location>
        <begin position="395"/>
        <end position="415"/>
    </location>
</feature>
<feature type="domain" description="HAMP" evidence="3">
    <location>
        <begin position="417"/>
        <end position="473"/>
    </location>
</feature>
<feature type="domain" description="Histidine kinase" evidence="4">
    <location>
        <begin position="513"/>
        <end position="734"/>
    </location>
</feature>
<feature type="domain" description="Response regulatory" evidence="5">
    <location>
        <begin position="751"/>
        <end position="869"/>
    </location>
</feature>
<feature type="domain" description="HPt">
    <location>
        <begin position="894"/>
        <end position="987"/>
    </location>
</feature>
<feature type="region of interest" description="Disordered" evidence="6">
    <location>
        <begin position="27"/>
        <end position="82"/>
    </location>
</feature>
<feature type="region of interest" description="Disordered" evidence="6">
    <location>
        <begin position="154"/>
        <end position="198"/>
    </location>
</feature>
<feature type="region of interest" description="Disordered" evidence="6">
    <location>
        <begin position="224"/>
        <end position="245"/>
    </location>
</feature>
<feature type="compositionally biased region" description="Low complexity" evidence="6">
    <location>
        <begin position="40"/>
        <end position="49"/>
    </location>
</feature>
<feature type="compositionally biased region" description="Basic residues" evidence="6">
    <location>
        <begin position="161"/>
        <end position="183"/>
    </location>
</feature>
<feature type="modified residue" description="Phosphohistidine; by autocatalysis" evidence="4">
    <location>
        <position position="516"/>
    </location>
</feature>
<feature type="modified residue" description="4-aspartylphosphate" evidence="5">
    <location>
        <position position="800"/>
    </location>
</feature>
<feature type="modified residue" description="Phosphohistidine" evidence="1">
    <location>
        <position position="933"/>
    </location>
</feature>
<gene>
    <name type="primary">aruS</name>
    <name type="ordered locus">PA4982</name>
</gene>
<proteinExistence type="inferred from homology"/>
<dbReference type="EC" id="2.7.13.3"/>
<dbReference type="EMBL" id="AE004091">
    <property type="protein sequence ID" value="AAG08367.1"/>
    <property type="molecule type" value="Genomic_DNA"/>
</dbReference>
<dbReference type="PIR" id="G83022">
    <property type="entry name" value="G83022"/>
</dbReference>
<dbReference type="SMR" id="Q9HUI3"/>
<dbReference type="STRING" id="208964.PA4982"/>
<dbReference type="PaxDb" id="208964-PA4982"/>
<dbReference type="PseudoCAP" id="PA4982"/>
<dbReference type="HOGENOM" id="CLU_000445_104_15_6"/>
<dbReference type="InParanoid" id="Q9HUI3"/>
<dbReference type="PhylomeDB" id="Q9HUI3"/>
<dbReference type="UniPathway" id="UPA00073"/>
<dbReference type="Proteomes" id="UP000002438">
    <property type="component" value="Chromosome"/>
</dbReference>
<dbReference type="GO" id="GO:0005886">
    <property type="term" value="C:plasma membrane"/>
    <property type="evidence" value="ECO:0007669"/>
    <property type="project" value="UniProtKB-SubCell"/>
</dbReference>
<dbReference type="GO" id="GO:0005524">
    <property type="term" value="F:ATP binding"/>
    <property type="evidence" value="ECO:0007669"/>
    <property type="project" value="UniProtKB-KW"/>
</dbReference>
<dbReference type="GO" id="GO:0000155">
    <property type="term" value="F:phosphorelay sensor kinase activity"/>
    <property type="evidence" value="ECO:0007669"/>
    <property type="project" value="InterPro"/>
</dbReference>
<dbReference type="GO" id="GO:0006527">
    <property type="term" value="P:arginine catabolic process"/>
    <property type="evidence" value="ECO:0007669"/>
    <property type="project" value="UniProtKB-UniPathway"/>
</dbReference>
<dbReference type="CDD" id="cd06225">
    <property type="entry name" value="HAMP"/>
    <property type="match status" value="1"/>
</dbReference>
<dbReference type="CDD" id="cd16922">
    <property type="entry name" value="HATPase_EvgS-ArcB-TorS-like"/>
    <property type="match status" value="1"/>
</dbReference>
<dbReference type="CDD" id="cd00082">
    <property type="entry name" value="HisKA"/>
    <property type="match status" value="1"/>
</dbReference>
<dbReference type="CDD" id="cd17546">
    <property type="entry name" value="REC_hyHK_CKI1_RcsC-like"/>
    <property type="match status" value="1"/>
</dbReference>
<dbReference type="FunFam" id="3.30.565.10:FF:000010">
    <property type="entry name" value="Sensor histidine kinase RcsC"/>
    <property type="match status" value="1"/>
</dbReference>
<dbReference type="Gene3D" id="1.10.287.130">
    <property type="match status" value="1"/>
</dbReference>
<dbReference type="Gene3D" id="3.40.50.2300">
    <property type="match status" value="1"/>
</dbReference>
<dbReference type="Gene3D" id="6.10.340.10">
    <property type="match status" value="1"/>
</dbReference>
<dbReference type="Gene3D" id="3.30.565.10">
    <property type="entry name" value="Histidine kinase-like ATPase, C-terminal domain"/>
    <property type="match status" value="1"/>
</dbReference>
<dbReference type="Gene3D" id="1.20.120.160">
    <property type="entry name" value="HPT domain"/>
    <property type="match status" value="1"/>
</dbReference>
<dbReference type="InterPro" id="IPR011006">
    <property type="entry name" value="CheY-like_superfamily"/>
</dbReference>
<dbReference type="InterPro" id="IPR003660">
    <property type="entry name" value="HAMP_dom"/>
</dbReference>
<dbReference type="InterPro" id="IPR036890">
    <property type="entry name" value="HATPase_C_sf"/>
</dbReference>
<dbReference type="InterPro" id="IPR005467">
    <property type="entry name" value="His_kinase_dom"/>
</dbReference>
<dbReference type="InterPro" id="IPR003661">
    <property type="entry name" value="HisK_dim/P_dom"/>
</dbReference>
<dbReference type="InterPro" id="IPR036097">
    <property type="entry name" value="HisK_dim/P_sf"/>
</dbReference>
<dbReference type="InterPro" id="IPR036641">
    <property type="entry name" value="HPT_dom_sf"/>
</dbReference>
<dbReference type="InterPro" id="IPR033414">
    <property type="entry name" value="Sensor_dom"/>
</dbReference>
<dbReference type="InterPro" id="IPR004358">
    <property type="entry name" value="Sig_transdc_His_kin-like_C"/>
</dbReference>
<dbReference type="InterPro" id="IPR008207">
    <property type="entry name" value="Sig_transdc_His_kin_Hpt_dom"/>
</dbReference>
<dbReference type="InterPro" id="IPR001789">
    <property type="entry name" value="Sig_transdc_resp-reg_receiver"/>
</dbReference>
<dbReference type="PANTHER" id="PTHR45339">
    <property type="entry name" value="HYBRID SIGNAL TRANSDUCTION HISTIDINE KINASE J"/>
    <property type="match status" value="1"/>
</dbReference>
<dbReference type="PANTHER" id="PTHR45339:SF1">
    <property type="entry name" value="HYBRID SIGNAL TRANSDUCTION HISTIDINE KINASE J"/>
    <property type="match status" value="1"/>
</dbReference>
<dbReference type="Pfam" id="PF17149">
    <property type="entry name" value="CHASE5"/>
    <property type="match status" value="1"/>
</dbReference>
<dbReference type="Pfam" id="PF00672">
    <property type="entry name" value="HAMP"/>
    <property type="match status" value="1"/>
</dbReference>
<dbReference type="Pfam" id="PF02518">
    <property type="entry name" value="HATPase_c"/>
    <property type="match status" value="1"/>
</dbReference>
<dbReference type="Pfam" id="PF00512">
    <property type="entry name" value="HisKA"/>
    <property type="match status" value="1"/>
</dbReference>
<dbReference type="Pfam" id="PF01627">
    <property type="entry name" value="Hpt"/>
    <property type="match status" value="1"/>
</dbReference>
<dbReference type="Pfam" id="PF00072">
    <property type="entry name" value="Response_reg"/>
    <property type="match status" value="1"/>
</dbReference>
<dbReference type="PRINTS" id="PR00344">
    <property type="entry name" value="BCTRLSENSOR"/>
</dbReference>
<dbReference type="SMART" id="SM00304">
    <property type="entry name" value="HAMP"/>
    <property type="match status" value="1"/>
</dbReference>
<dbReference type="SMART" id="SM00387">
    <property type="entry name" value="HATPase_c"/>
    <property type="match status" value="1"/>
</dbReference>
<dbReference type="SMART" id="SM00388">
    <property type="entry name" value="HisKA"/>
    <property type="match status" value="1"/>
</dbReference>
<dbReference type="SMART" id="SM00448">
    <property type="entry name" value="REC"/>
    <property type="match status" value="1"/>
</dbReference>
<dbReference type="SUPFAM" id="SSF55874">
    <property type="entry name" value="ATPase domain of HSP90 chaperone/DNA topoisomerase II/histidine kinase"/>
    <property type="match status" value="1"/>
</dbReference>
<dbReference type="SUPFAM" id="SSF52172">
    <property type="entry name" value="CheY-like"/>
    <property type="match status" value="1"/>
</dbReference>
<dbReference type="SUPFAM" id="SSF47226">
    <property type="entry name" value="Histidine-containing phosphotransfer domain, HPT domain"/>
    <property type="match status" value="1"/>
</dbReference>
<dbReference type="SUPFAM" id="SSF47384">
    <property type="entry name" value="Homodimeric domain of signal transducing histidine kinase"/>
    <property type="match status" value="1"/>
</dbReference>
<dbReference type="PROSITE" id="PS50885">
    <property type="entry name" value="HAMP"/>
    <property type="match status" value="1"/>
</dbReference>
<dbReference type="PROSITE" id="PS50109">
    <property type="entry name" value="HIS_KIN"/>
    <property type="match status" value="1"/>
</dbReference>
<dbReference type="PROSITE" id="PS50110">
    <property type="entry name" value="RESPONSE_REGULATORY"/>
    <property type="match status" value="1"/>
</dbReference>
<accession>Q9HUI3</accession>
<sequence length="998" mass="109138">MAAGRPGTGCGDHPLLRLSGIPADFLERRPAGPGAGAGAGEAAVRRAGLPGRGGGAGQLAALPARRRRRTGRPDTGLPHARARSRPGVFRRAGAARGGGDLLQPPAAGAHPIPRRPRRLSRRAVVRRKLRGGLRPLRRPPRQRRMGFRQPTELRQAGAPAHRLHRPRTTHRHAVRRAPGRRREHPCAARTADGGLPAGGGLAALAAGGEDGRDRPGPAWLSRRRQHPALAGRQRARLSAPRRQPRGRLVSGHGGVLARRLLWRVLLFSLCFTVLAGAVQLFFEYRREMREIEARLELIRSGYLASFERSLWDLNQEQLNVQLRGLGDFPDIARVSLQSADFNLLQGDQRPRGMLRVERFPLSYQPPGGERRQLGELEIAIDLAAVYRRLVSGGLASLLWMGSFLCGLAVALSWLFHSLVTRHLWRMSEFAGHIAEGDLQQPLRLDKVDRERDEIDAVAAALEDMRQALRTDRRRRDADRDELRRQVERRTASLRRAKDQAEAADRAKSRFLATMSHEIRTPLNGILGMAELLREASLGERDRQRLRALATAGEGLLAILNEVLHFARLEEAPDVPEAVDFSLRSLLEDVLTLLEPRARENATRLDLWLDPQVHDGHRGAEQFLRQVLTNLLGNAVKFTEAGEVRVRVERLARSAGSERLRLSVADDGIGIPEEMRERIFERFTQGGDAVTRRYGGTGLGLAISKRLVEALGGRIGVESRVGQGSTFWFEIELALASLSGATPPAASVSALEVLLVEDVALNREVAQGLLERDGHRVMLAEDAGPALALCRQRRFDLILLDMHLPGMAGLELCAGIRRQLDGLNRATPIFAFTASIQPDMVRRYFAAGMQGVLGKPLRMDELRRALGEVGTSVPALAVDAALDRQMLETHRRLLGRHKLAGLLGNLLGSLDEQLPLLAEALDQADLAEAANIAHRLSGSCHSMGLVALGAGLGELEREALGAAGVDPRAWGARLGSLRRDGAEALRRAGFLGEADSAAG</sequence>
<reference key="1">
    <citation type="journal article" date="2000" name="Nature">
        <title>Complete genome sequence of Pseudomonas aeruginosa PAO1, an opportunistic pathogen.</title>
        <authorList>
            <person name="Stover C.K."/>
            <person name="Pham X.-Q.T."/>
            <person name="Erwin A.L."/>
            <person name="Mizoguchi S.D."/>
            <person name="Warrener P."/>
            <person name="Hickey M.J."/>
            <person name="Brinkman F.S.L."/>
            <person name="Hufnagle W.O."/>
            <person name="Kowalik D.J."/>
            <person name="Lagrou M."/>
            <person name="Garber R.L."/>
            <person name="Goltry L."/>
            <person name="Tolentino E."/>
            <person name="Westbrock-Wadman S."/>
            <person name="Yuan Y."/>
            <person name="Brody L.L."/>
            <person name="Coulter S.N."/>
            <person name="Folger K.R."/>
            <person name="Kas A."/>
            <person name="Larbig K."/>
            <person name="Lim R.M."/>
            <person name="Smith K.A."/>
            <person name="Spencer D.H."/>
            <person name="Wong G.K.-S."/>
            <person name="Wu Z."/>
            <person name="Paulsen I.T."/>
            <person name="Reizer J."/>
            <person name="Saier M.H. Jr."/>
            <person name="Hancock R.E.W."/>
            <person name="Lory S."/>
            <person name="Olson M.V."/>
        </authorList>
    </citation>
    <scope>NUCLEOTIDE SEQUENCE [LARGE SCALE GENOMIC DNA]</scope>
    <source>
        <strain>ATCC 15692 / DSM 22644 / CIP 104116 / JCM 14847 / LMG 12228 / 1C / PRS 101 / PAO1</strain>
    </source>
</reference>
<reference key="2">
    <citation type="journal article" date="2007" name="J. Bacteriol.">
        <title>Functional genomics enables identification of genes of the arginine transaminase pathway in Pseudomonas aeruginosa.</title>
        <authorList>
            <person name="Yang Z."/>
            <person name="Lu C.D."/>
        </authorList>
    </citation>
    <scope>FUNCTION</scope>
    <scope>PATHWAY</scope>
    <scope>DISRUPTION PHENOTYPE</scope>
    <scope>GENE NAME</scope>
    <source>
        <strain>ATCC 15692 / DSM 22644 / CIP 104116 / JCM 14847 / LMG 12228 / 1C / PRS 101 / PAO1</strain>
    </source>
</reference>
<organism>
    <name type="scientific">Pseudomonas aeruginosa (strain ATCC 15692 / DSM 22644 / CIP 104116 / JCM 14847 / LMG 12228 / 1C / PRS 101 / PAO1)</name>
    <dbReference type="NCBI Taxonomy" id="208964"/>
    <lineage>
        <taxon>Bacteria</taxon>
        <taxon>Pseudomonadati</taxon>
        <taxon>Pseudomonadota</taxon>
        <taxon>Gammaproteobacteria</taxon>
        <taxon>Pseudomonadales</taxon>
        <taxon>Pseudomonadaceae</taxon>
        <taxon>Pseudomonas</taxon>
    </lineage>
</organism>
<evidence type="ECO:0000250" key="1"/>
<evidence type="ECO:0000255" key="2"/>
<evidence type="ECO:0000255" key="3">
    <source>
        <dbReference type="PROSITE-ProRule" id="PRU00102"/>
    </source>
</evidence>
<evidence type="ECO:0000255" key="4">
    <source>
        <dbReference type="PROSITE-ProRule" id="PRU00107"/>
    </source>
</evidence>
<evidence type="ECO:0000255" key="5">
    <source>
        <dbReference type="PROSITE-ProRule" id="PRU00169"/>
    </source>
</evidence>
<evidence type="ECO:0000256" key="6">
    <source>
        <dbReference type="SAM" id="MobiDB-lite"/>
    </source>
</evidence>
<evidence type="ECO:0000269" key="7">
    <source>
    </source>
</evidence>
<evidence type="ECO:0000305" key="8"/>
<name>ARUS_PSEAE</name>
<keyword id="KW-0067">ATP-binding</keyword>
<keyword id="KW-1003">Cell membrane</keyword>
<keyword id="KW-0418">Kinase</keyword>
<keyword id="KW-0472">Membrane</keyword>
<keyword id="KW-0547">Nucleotide-binding</keyword>
<keyword id="KW-0597">Phosphoprotein</keyword>
<keyword id="KW-1185">Reference proteome</keyword>
<keyword id="KW-0808">Transferase</keyword>
<keyword id="KW-0812">Transmembrane</keyword>
<keyword id="KW-1133">Transmembrane helix</keyword>
<keyword id="KW-0902">Two-component regulatory system</keyword>
<comment type="function">
    <text evidence="7">Member of the two-component regulatory system AruS/AruR, which is involved in the regulation of the arginine transaminase (ATA) pathway in response to exogeneous L-arginine. Probably functions as a sensor kinase that phosphorylates AruR.</text>
</comment>
<comment type="catalytic activity">
    <reaction>
        <text>ATP + protein L-histidine = ADP + protein N-phospho-L-histidine.</text>
        <dbReference type="EC" id="2.7.13.3"/>
    </reaction>
</comment>
<comment type="pathway">
    <text evidence="7">Amino-acid degradation; L-arginine degradation [regulation].</text>
</comment>
<comment type="subcellular location">
    <subcellularLocation>
        <location evidence="8">Cell membrane</location>
        <topology evidence="8">Multi-pass membrane protein</topology>
    </subcellularLocation>
</comment>
<comment type="PTM">
    <text evidence="1">Autophosphorylated. Activation may require a sequential transfer of a phosphate group from a His in the primary transmitter domain, to an Asp in the receiver domain and to a His in the secondary transmitter domain (By similarity).</text>
</comment>
<comment type="disruption phenotype">
    <text evidence="7">Disruption in the aruF mutant prevents growth on L-arginine.</text>
</comment>